<name>RUVB1_MOUSE</name>
<proteinExistence type="evidence at protein level"/>
<protein>
    <recommendedName>
        <fullName>RuvB-like 1</fullName>
        <ecNumber evidence="2">3.6.4.12</ecNumber>
    </recommendedName>
    <alternativeName>
        <fullName>49 kDa TATA box-binding protein-interacting protein</fullName>
        <shortName>49 kDa TBP-interacting protein</shortName>
    </alternativeName>
    <alternativeName>
        <fullName>DNA helicase p50</fullName>
    </alternativeName>
    <alternativeName>
        <fullName>Pontin 52</fullName>
    </alternativeName>
    <alternativeName>
        <fullName>TIP49a</fullName>
    </alternativeName>
</protein>
<dbReference type="EC" id="3.6.4.12" evidence="2"/>
<dbReference type="EMBL" id="AF100694">
    <property type="protein sequence ID" value="AAD02877.1"/>
    <property type="molecule type" value="mRNA"/>
</dbReference>
<dbReference type="EMBL" id="BC004718">
    <property type="protein sequence ID" value="AAH04718.1"/>
    <property type="molecule type" value="mRNA"/>
</dbReference>
<dbReference type="CCDS" id="CCDS20336.1"/>
<dbReference type="RefSeq" id="NP_062659.1">
    <property type="nucleotide sequence ID" value="NM_019685.3"/>
</dbReference>
<dbReference type="SMR" id="P60122"/>
<dbReference type="BioGRID" id="208024">
    <property type="interactions" value="114"/>
</dbReference>
<dbReference type="ComplexPortal" id="CPX-878">
    <property type="entry name" value="INO80 chromatin remodeling complex"/>
</dbReference>
<dbReference type="ComplexPortal" id="CPX-976">
    <property type="entry name" value="SRCAP chromatin remodeling complex"/>
</dbReference>
<dbReference type="ComplexPortal" id="CPX-990">
    <property type="entry name" value="NuA4 histone acetyltransferase complex"/>
</dbReference>
<dbReference type="FunCoup" id="P60122">
    <property type="interactions" value="2861"/>
</dbReference>
<dbReference type="IntAct" id="P60122">
    <property type="interactions" value="179"/>
</dbReference>
<dbReference type="MINT" id="P60122"/>
<dbReference type="STRING" id="10090.ENSMUSP00000032165"/>
<dbReference type="GlyGen" id="P60122">
    <property type="glycosylation" value="1 site, 1 O-linked glycan (1 site)"/>
</dbReference>
<dbReference type="iPTMnet" id="P60122"/>
<dbReference type="PhosphoSitePlus" id="P60122"/>
<dbReference type="SwissPalm" id="P60122"/>
<dbReference type="jPOST" id="P60122"/>
<dbReference type="PaxDb" id="10090-ENSMUSP00000032165"/>
<dbReference type="PeptideAtlas" id="P60122"/>
<dbReference type="ProteomicsDB" id="256662"/>
<dbReference type="Pumba" id="P60122"/>
<dbReference type="Antibodypedia" id="17283">
    <property type="antibodies" value="393 antibodies from 35 providers"/>
</dbReference>
<dbReference type="DNASU" id="56505"/>
<dbReference type="Ensembl" id="ENSMUST00000032165.16">
    <property type="protein sequence ID" value="ENSMUSP00000032165.10"/>
    <property type="gene ID" value="ENSMUSG00000030079.16"/>
</dbReference>
<dbReference type="GeneID" id="56505"/>
<dbReference type="KEGG" id="mmu:56505"/>
<dbReference type="UCSC" id="uc009cvh.1">
    <property type="organism name" value="mouse"/>
</dbReference>
<dbReference type="AGR" id="MGI:1928760"/>
<dbReference type="CTD" id="8607"/>
<dbReference type="MGI" id="MGI:1928760">
    <property type="gene designation" value="Ruvbl1"/>
</dbReference>
<dbReference type="VEuPathDB" id="HostDB:ENSMUSG00000030079"/>
<dbReference type="eggNOG" id="KOG1942">
    <property type="taxonomic scope" value="Eukaryota"/>
</dbReference>
<dbReference type="GeneTree" id="ENSGT00940000153556"/>
<dbReference type="HOGENOM" id="CLU_028311_1_1_1"/>
<dbReference type="InParanoid" id="P60122"/>
<dbReference type="OMA" id="RTLPYNK"/>
<dbReference type="OrthoDB" id="10060499at2759"/>
<dbReference type="PhylomeDB" id="P60122"/>
<dbReference type="TreeFam" id="TF300457"/>
<dbReference type="Reactome" id="R-MMU-201722">
    <property type="pathway name" value="Formation of the beta-catenin:TCF transactivating complex"/>
</dbReference>
<dbReference type="Reactome" id="R-MMU-5689603">
    <property type="pathway name" value="UCH proteinases"/>
</dbReference>
<dbReference type="Reactome" id="R-MMU-5689880">
    <property type="pathway name" value="Ub-specific processing proteases"/>
</dbReference>
<dbReference type="Reactome" id="R-MMU-5696394">
    <property type="pathway name" value="DNA Damage Recognition in GG-NER"/>
</dbReference>
<dbReference type="Reactome" id="R-MMU-606279">
    <property type="pathway name" value="Deposition of new CENPA-containing nucleosomes at the centromere"/>
</dbReference>
<dbReference type="BioGRID-ORCS" id="56505">
    <property type="hits" value="46 hits in 117 CRISPR screens"/>
</dbReference>
<dbReference type="ChiTaRS" id="Ruvbl1">
    <property type="organism name" value="mouse"/>
</dbReference>
<dbReference type="PRO" id="PR:P60122"/>
<dbReference type="Proteomes" id="UP000000589">
    <property type="component" value="Chromosome 6"/>
</dbReference>
<dbReference type="RNAct" id="P60122">
    <property type="molecule type" value="protein"/>
</dbReference>
<dbReference type="Bgee" id="ENSMUSG00000030079">
    <property type="expression patterns" value="Expressed in epiblast (generic) and 82 other cell types or tissues"/>
</dbReference>
<dbReference type="ExpressionAtlas" id="P60122">
    <property type="expression patterns" value="baseline and differential"/>
</dbReference>
<dbReference type="GO" id="GO:0005813">
    <property type="term" value="C:centrosome"/>
    <property type="evidence" value="ECO:0007669"/>
    <property type="project" value="UniProtKB-SubCell"/>
</dbReference>
<dbReference type="GO" id="GO:0036064">
    <property type="term" value="C:ciliary basal body"/>
    <property type="evidence" value="ECO:0007669"/>
    <property type="project" value="Ensembl"/>
</dbReference>
<dbReference type="GO" id="GO:0005829">
    <property type="term" value="C:cytosol"/>
    <property type="evidence" value="ECO:0007669"/>
    <property type="project" value="Ensembl"/>
</dbReference>
<dbReference type="GO" id="GO:0120293">
    <property type="term" value="C:dynein axonemal particle"/>
    <property type="evidence" value="ECO:0000250"/>
    <property type="project" value="UniProtKB"/>
</dbReference>
<dbReference type="GO" id="GO:0031011">
    <property type="term" value="C:Ino80 complex"/>
    <property type="evidence" value="ECO:0000266"/>
    <property type="project" value="ComplexPortal"/>
</dbReference>
<dbReference type="GO" id="GO:0016020">
    <property type="term" value="C:membrane"/>
    <property type="evidence" value="ECO:0007669"/>
    <property type="project" value="UniProtKB-SubCell"/>
</dbReference>
<dbReference type="GO" id="GO:0071339">
    <property type="term" value="C:MLL1 complex"/>
    <property type="evidence" value="ECO:0000250"/>
    <property type="project" value="UniProtKB"/>
</dbReference>
<dbReference type="GO" id="GO:0035267">
    <property type="term" value="C:NuA4 histone acetyltransferase complex"/>
    <property type="evidence" value="ECO:0000250"/>
    <property type="project" value="UniProtKB"/>
</dbReference>
<dbReference type="GO" id="GO:0016363">
    <property type="term" value="C:nuclear matrix"/>
    <property type="evidence" value="ECO:0007669"/>
    <property type="project" value="UniProtKB-SubCell"/>
</dbReference>
<dbReference type="GO" id="GO:0016607">
    <property type="term" value="C:nuclear speck"/>
    <property type="evidence" value="ECO:0007669"/>
    <property type="project" value="Ensembl"/>
</dbReference>
<dbReference type="GO" id="GO:0000786">
    <property type="term" value="C:nucleosome"/>
    <property type="evidence" value="ECO:0000266"/>
    <property type="project" value="ComplexPortal"/>
</dbReference>
<dbReference type="GO" id="GO:0101031">
    <property type="term" value="C:protein folding chaperone complex"/>
    <property type="evidence" value="ECO:0007669"/>
    <property type="project" value="Ensembl"/>
</dbReference>
<dbReference type="GO" id="GO:0097255">
    <property type="term" value="C:R2TP complex"/>
    <property type="evidence" value="ECO:0000250"/>
    <property type="project" value="UniProtKB"/>
</dbReference>
<dbReference type="GO" id="GO:1990904">
    <property type="term" value="C:ribonucleoprotein complex"/>
    <property type="evidence" value="ECO:0000314"/>
    <property type="project" value="MGI"/>
</dbReference>
<dbReference type="GO" id="GO:1990062">
    <property type="term" value="C:RPAP3/R2TP/prefoldin-like complex"/>
    <property type="evidence" value="ECO:0007669"/>
    <property type="project" value="Ensembl"/>
</dbReference>
<dbReference type="GO" id="GO:0000812">
    <property type="term" value="C:Swr1 complex"/>
    <property type="evidence" value="ECO:0000250"/>
    <property type="project" value="UniProtKB"/>
</dbReference>
<dbReference type="GO" id="GO:0043531">
    <property type="term" value="F:ADP binding"/>
    <property type="evidence" value="ECO:0000314"/>
    <property type="project" value="UniProtKB"/>
</dbReference>
<dbReference type="GO" id="GO:0005524">
    <property type="term" value="F:ATP binding"/>
    <property type="evidence" value="ECO:0000314"/>
    <property type="project" value="UniProtKB"/>
</dbReference>
<dbReference type="GO" id="GO:0016887">
    <property type="term" value="F:ATP hydrolysis activity"/>
    <property type="evidence" value="ECO:0000250"/>
    <property type="project" value="UniProtKB"/>
</dbReference>
<dbReference type="GO" id="GO:0051117">
    <property type="term" value="F:ATPase binding"/>
    <property type="evidence" value="ECO:0000353"/>
    <property type="project" value="UniProtKB"/>
</dbReference>
<dbReference type="GO" id="GO:0003678">
    <property type="term" value="F:DNA helicase activity"/>
    <property type="evidence" value="ECO:0007669"/>
    <property type="project" value="Ensembl"/>
</dbReference>
<dbReference type="GO" id="GO:0017025">
    <property type="term" value="F:TBP-class protein binding"/>
    <property type="evidence" value="ECO:0007669"/>
    <property type="project" value="Ensembl"/>
</dbReference>
<dbReference type="GO" id="GO:0001094">
    <property type="term" value="F:TFIID-class transcription factor complex binding"/>
    <property type="evidence" value="ECO:0000353"/>
    <property type="project" value="UniProtKB"/>
</dbReference>
<dbReference type="GO" id="GO:0003713">
    <property type="term" value="F:transcription coactivator activity"/>
    <property type="evidence" value="ECO:0007669"/>
    <property type="project" value="Ensembl"/>
</dbReference>
<dbReference type="GO" id="GO:0051301">
    <property type="term" value="P:cell division"/>
    <property type="evidence" value="ECO:0007669"/>
    <property type="project" value="UniProtKB-KW"/>
</dbReference>
<dbReference type="GO" id="GO:0006338">
    <property type="term" value="P:chromatin remodeling"/>
    <property type="evidence" value="ECO:0000266"/>
    <property type="project" value="ComplexPortal"/>
</dbReference>
<dbReference type="GO" id="GO:0006310">
    <property type="term" value="P:DNA recombination"/>
    <property type="evidence" value="ECO:0007669"/>
    <property type="project" value="UniProtKB-KW"/>
</dbReference>
<dbReference type="GO" id="GO:0006281">
    <property type="term" value="P:DNA repair"/>
    <property type="evidence" value="ECO:0007669"/>
    <property type="project" value="UniProtKB-KW"/>
</dbReference>
<dbReference type="GO" id="GO:0090263">
    <property type="term" value="P:positive regulation of canonical Wnt signaling pathway"/>
    <property type="evidence" value="ECO:0007669"/>
    <property type="project" value="Ensembl"/>
</dbReference>
<dbReference type="GO" id="GO:0045739">
    <property type="term" value="P:positive regulation of DNA repair"/>
    <property type="evidence" value="ECO:0000314"/>
    <property type="project" value="ComplexPortal"/>
</dbReference>
<dbReference type="GO" id="GO:0045893">
    <property type="term" value="P:positive regulation of DNA-templated transcription"/>
    <property type="evidence" value="ECO:0000266"/>
    <property type="project" value="ComplexPortal"/>
</dbReference>
<dbReference type="GO" id="GO:1905168">
    <property type="term" value="P:positive regulation of double-strand break repair via homologous recombination"/>
    <property type="evidence" value="ECO:0000266"/>
    <property type="project" value="ComplexPortal"/>
</dbReference>
<dbReference type="GO" id="GO:1904507">
    <property type="term" value="P:positive regulation of telomere maintenance in response to DNA damage"/>
    <property type="evidence" value="ECO:0000315"/>
    <property type="project" value="ComplexPortal"/>
</dbReference>
<dbReference type="GO" id="GO:0042981">
    <property type="term" value="P:regulation of apoptotic process"/>
    <property type="evidence" value="ECO:0000303"/>
    <property type="project" value="ComplexPortal"/>
</dbReference>
<dbReference type="GO" id="GO:0051726">
    <property type="term" value="P:regulation of cell cycle"/>
    <property type="evidence" value="ECO:0000266"/>
    <property type="project" value="ComplexPortal"/>
</dbReference>
<dbReference type="GO" id="GO:0033044">
    <property type="term" value="P:regulation of chromosome organization"/>
    <property type="evidence" value="ECO:0000266"/>
    <property type="project" value="ComplexPortal"/>
</dbReference>
<dbReference type="GO" id="GO:0006282">
    <property type="term" value="P:regulation of DNA repair"/>
    <property type="evidence" value="ECO:0000314"/>
    <property type="project" value="ComplexPortal"/>
</dbReference>
<dbReference type="GO" id="GO:0006275">
    <property type="term" value="P:regulation of DNA replication"/>
    <property type="evidence" value="ECO:0000266"/>
    <property type="project" value="ComplexPortal"/>
</dbReference>
<dbReference type="GO" id="GO:0060382">
    <property type="term" value="P:regulation of DNA strand elongation"/>
    <property type="evidence" value="ECO:0000266"/>
    <property type="project" value="ComplexPortal"/>
</dbReference>
<dbReference type="GO" id="GO:0006355">
    <property type="term" value="P:regulation of DNA-templated transcription"/>
    <property type="evidence" value="ECO:0000303"/>
    <property type="project" value="ComplexPortal"/>
</dbReference>
<dbReference type="GO" id="GO:2000779">
    <property type="term" value="P:regulation of double-strand break repair"/>
    <property type="evidence" value="ECO:0000303"/>
    <property type="project" value="ComplexPortal"/>
</dbReference>
<dbReference type="GO" id="GO:0045995">
    <property type="term" value="P:regulation of embryonic development"/>
    <property type="evidence" value="ECO:0000315"/>
    <property type="project" value="ComplexPortal"/>
</dbReference>
<dbReference type="GO" id="GO:0000723">
    <property type="term" value="P:telomere maintenance"/>
    <property type="evidence" value="ECO:0000315"/>
    <property type="project" value="ComplexPortal"/>
</dbReference>
<dbReference type="FunFam" id="1.10.8.60:FF:000010">
    <property type="entry name" value="RuvB-like helicase"/>
    <property type="match status" value="1"/>
</dbReference>
<dbReference type="FunFam" id="2.40.50.360:FF:000001">
    <property type="entry name" value="RuvB-like helicase"/>
    <property type="match status" value="1"/>
</dbReference>
<dbReference type="Gene3D" id="1.10.8.60">
    <property type="match status" value="1"/>
</dbReference>
<dbReference type="Gene3D" id="3.40.50.300">
    <property type="entry name" value="P-loop containing nucleotide triphosphate hydrolases"/>
    <property type="match status" value="1"/>
</dbReference>
<dbReference type="Gene3D" id="2.40.50.360">
    <property type="entry name" value="RuvB-like helicase, domain II"/>
    <property type="match status" value="1"/>
</dbReference>
<dbReference type="InterPro" id="IPR003593">
    <property type="entry name" value="AAA+_ATPase"/>
</dbReference>
<dbReference type="InterPro" id="IPR027417">
    <property type="entry name" value="P-loop_NTPase"/>
</dbReference>
<dbReference type="InterPro" id="IPR027238">
    <property type="entry name" value="RuvB-like"/>
</dbReference>
<dbReference type="InterPro" id="IPR041048">
    <property type="entry name" value="RuvB-like_C"/>
</dbReference>
<dbReference type="InterPro" id="IPR042487">
    <property type="entry name" value="RuvBL1/2_DNA/RNA_bd_dom"/>
</dbReference>
<dbReference type="InterPro" id="IPR010339">
    <property type="entry name" value="TIP49_P-loop"/>
</dbReference>
<dbReference type="PANTHER" id="PTHR11093">
    <property type="entry name" value="RUVB-RELATED REPTIN AND PONTIN"/>
    <property type="match status" value="1"/>
</dbReference>
<dbReference type="Pfam" id="PF06068">
    <property type="entry name" value="TIP49"/>
    <property type="match status" value="1"/>
</dbReference>
<dbReference type="Pfam" id="PF17856">
    <property type="entry name" value="TIP49_C"/>
    <property type="match status" value="1"/>
</dbReference>
<dbReference type="SMART" id="SM00382">
    <property type="entry name" value="AAA"/>
    <property type="match status" value="1"/>
</dbReference>
<dbReference type="SUPFAM" id="SSF52540">
    <property type="entry name" value="P-loop containing nucleoside triphosphate hydrolases"/>
    <property type="match status" value="1"/>
</dbReference>
<sequence length="456" mass="50214">MKIEEVKSTTKTQRIASHSHVKGLGLDESGLAKQAASGLVGQENAREACGVIVELIKSKKMAGRAVLLAGPPGTGKTALALAIAQELGSKVPFCPMVGSEVYSTEIKKTEVLMENFRRAIGLRIKETKEVYEGEVTELTPCETENPMGGYGKTISHVIIGLKTAKGTKQLKLDPSIFESLQKERVEAGDVIYIEANSGAVKRQGRCDTYATEFDLEAEEYVPLPKGDVHKKKEIIQDVTLHDLDVANARPQGGQDILSMMGQLMKPKKTEITDKLRGEINKVVNKYIDQGVAELVPGVLFVDEVHMLDIECFTYLHRALESSIAPIVIFASNRGNCVIRGTEDITSPHGIPLDLLDRVMIIRTMLYTPQEMKQIIKIRAQTEGINISEEALNHLGEIGTKTTLRYSVQLLTPANLLAKINGKDSIEKEHVEEISELFYDAKSSAKILADQQDKYMK</sequence>
<evidence type="ECO:0000250" key="1">
    <source>
        <dbReference type="UniProtKB" id="Q9DE26"/>
    </source>
</evidence>
<evidence type="ECO:0000250" key="2">
    <source>
        <dbReference type="UniProtKB" id="Q9Y265"/>
    </source>
</evidence>
<evidence type="ECO:0000305" key="3"/>
<reference key="1">
    <citation type="journal article" date="1998" name="Proc. Natl. Acad. Sci. U.S.A.">
        <title>Pontin52, an interaction partner of beta-catenin, binds to the TATA box binding protein.</title>
        <authorList>
            <person name="Bauer A."/>
            <person name="Huber O."/>
            <person name="Kemler R."/>
        </authorList>
    </citation>
    <scope>NUCLEOTIDE SEQUENCE [MRNA]</scope>
    <source>
        <tissue>Mammary gland</tissue>
    </source>
</reference>
<reference key="2">
    <citation type="journal article" date="2004" name="Genome Res.">
        <title>The status, quality, and expansion of the NIH full-length cDNA project: the Mammalian Gene Collection (MGC).</title>
        <authorList>
            <consortium name="The MGC Project Team"/>
        </authorList>
    </citation>
    <scope>NUCLEOTIDE SEQUENCE [LARGE SCALE MRNA]</scope>
    <source>
        <tissue>Mammary gland</tissue>
    </source>
</reference>
<reference key="3">
    <citation type="submission" date="2007-07" db="UniProtKB">
        <authorList>
            <person name="Lubec G."/>
            <person name="Yang J.W."/>
            <person name="Zigmond M."/>
        </authorList>
    </citation>
    <scope>PROTEIN SEQUENCE OF 318-333</scope>
    <source>
        <tissue>Brain</tissue>
    </source>
</reference>
<reference key="4">
    <citation type="journal article" date="2010" name="Cell">
        <title>A tissue-specific atlas of mouse protein phosphorylation and expression.</title>
        <authorList>
            <person name="Huttlin E.L."/>
            <person name="Jedrychowski M.P."/>
            <person name="Elias J.E."/>
            <person name="Goswami T."/>
            <person name="Rad R."/>
            <person name="Beausoleil S.A."/>
            <person name="Villen J."/>
            <person name="Haas W."/>
            <person name="Sowa M.E."/>
            <person name="Gygi S.P."/>
        </authorList>
    </citation>
    <scope>IDENTIFICATION BY MASS SPECTROMETRY [LARGE SCALE ANALYSIS]</scope>
    <source>
        <tissue>Brain</tissue>
        <tissue>Brown adipose tissue</tissue>
        <tissue>Heart</tissue>
        <tissue>Kidney</tissue>
        <tissue>Liver</tissue>
        <tissue>Lung</tissue>
        <tissue>Spleen</tissue>
        <tissue>Testis</tissue>
    </source>
</reference>
<organism>
    <name type="scientific">Mus musculus</name>
    <name type="common">Mouse</name>
    <dbReference type="NCBI Taxonomy" id="10090"/>
    <lineage>
        <taxon>Eukaryota</taxon>
        <taxon>Metazoa</taxon>
        <taxon>Chordata</taxon>
        <taxon>Craniata</taxon>
        <taxon>Vertebrata</taxon>
        <taxon>Euteleostomi</taxon>
        <taxon>Mammalia</taxon>
        <taxon>Eutheria</taxon>
        <taxon>Euarchontoglires</taxon>
        <taxon>Glires</taxon>
        <taxon>Rodentia</taxon>
        <taxon>Myomorpha</taxon>
        <taxon>Muroidea</taxon>
        <taxon>Muridae</taxon>
        <taxon>Murinae</taxon>
        <taxon>Mus</taxon>
        <taxon>Mus</taxon>
    </lineage>
</organism>
<accession>P60122</accession>
<accession>O35753</accession>
<keyword id="KW-0007">Acetylation</keyword>
<keyword id="KW-0010">Activator</keyword>
<keyword id="KW-0067">ATP-binding</keyword>
<keyword id="KW-0131">Cell cycle</keyword>
<keyword id="KW-0132">Cell division</keyword>
<keyword id="KW-0156">Chromatin regulator</keyword>
<keyword id="KW-0963">Cytoplasm</keyword>
<keyword id="KW-0206">Cytoskeleton</keyword>
<keyword id="KW-0903">Direct protein sequencing</keyword>
<keyword id="KW-0227">DNA damage</keyword>
<keyword id="KW-0233">DNA recombination</keyword>
<keyword id="KW-0234">DNA repair</keyword>
<keyword id="KW-0341">Growth regulation</keyword>
<keyword id="KW-0347">Helicase</keyword>
<keyword id="KW-0378">Hydrolase</keyword>
<keyword id="KW-1017">Isopeptide bond</keyword>
<keyword id="KW-0472">Membrane</keyword>
<keyword id="KW-0498">Mitosis</keyword>
<keyword id="KW-0547">Nucleotide-binding</keyword>
<keyword id="KW-0539">Nucleus</keyword>
<keyword id="KW-1185">Reference proteome</keyword>
<keyword id="KW-0804">Transcription</keyword>
<keyword id="KW-0805">Transcription regulation</keyword>
<keyword id="KW-0832">Ubl conjugation</keyword>
<comment type="function">
    <text evidence="2">Possesses single-stranded DNA-stimulated ATPase and ATP-dependent DNA helicase (3' to 5') activity; hexamerization is thought to be critical for ATP hydrolysis and adjacent subunits in the ring-like structure contribute to the ATPase activity (By similarity). Component of the NuA4 histone acetyltransferase complex which is involved in transcriptional activation of select genes principally by acetylation of nucleosomal histones H4 and H2A (By similarity). This modification may both alter nucleosome-DNA interactions and promote interaction of the modified histones with other proteins which positively regulate transcription (By similarity). This complex may be required for the activation of transcriptional programs associated with oncogene and proto-oncogene mediated growth induction, tumor suppressor mediated growth arrest and replicative senescence, apoptosis, and DNA repair (By similarity). The NuA4 complex ATPase and helicase activities seem to be, at least in part, contributed by the association of RUVBL1 and RUVBL2 with EP400 (By similarity). NuA4 may also play a direct role in DNA repair when recruited to sites of DNA damage (By similarity). Component of a SWR1-like complex that specifically mediates the removal of histone H2A.Z/H2AZ1 from the nucleosome (By similarity). Proposed core component of the chromatin remodeling INO80 complex which exhibits DNA- and nucleosome-activated ATPase activity and catalyzes ATP-dependent nucleosome sliding (By similarity). Plays an essential role in oncogenic transformation by MYC and also modulates transcriptional activation by the LEF1/TCF1-CTNNB1 complex (By similarity). Essential for cell proliferation (By similarity). May be able to bind plasminogen at cell surface and enhance plasminogen activation (By similarity).</text>
</comment>
<comment type="catalytic activity">
    <reaction evidence="2">
        <text>ATP + H2O = ADP + phosphate + H(+)</text>
        <dbReference type="Rhea" id="RHEA:13065"/>
        <dbReference type="ChEBI" id="CHEBI:15377"/>
        <dbReference type="ChEBI" id="CHEBI:15378"/>
        <dbReference type="ChEBI" id="CHEBI:30616"/>
        <dbReference type="ChEBI" id="CHEBI:43474"/>
        <dbReference type="ChEBI" id="CHEBI:456216"/>
        <dbReference type="EC" id="3.6.4.12"/>
    </reaction>
    <physiologicalReaction direction="left-to-right" evidence="2">
        <dbReference type="Rhea" id="RHEA:13066"/>
    </physiologicalReaction>
</comment>
<comment type="subunit">
    <text evidence="2">Forms homohexameric rings. Can form a dodecamer with RUVBL2 made of two stacked hexameric rings; however, even though RUVBL1 and RUVBL2 are present in equimolar ratio, the oligomeric status of each hexamer is not known. Oligomerization may regulate binding to nucleic acids and conversely, binding to nucleic acids may affect the dodecameric assembly. Interaction of the complex with DHX34 results in conformational changes of the N-terminus of the RUVBL2 subunits, resulting in loss of nucleotide binding ability and ATP hydrolysis of the complex (By similarity). Interacts with the transcriptional activation domain of MYC. Component of the RNA polymerase II holoenzyme complex. May also act to bridge the LEF1/TCF1-CTNNB1 complex and TBP. Component of the NuA4 histone acetyltransferase complex which contains the catalytic subunit KAT5/TIP60 and the subunits EP400, TRRAP/PAF400, BRD8/SMAP, EPC1, DMAP1/DNMAP1, RUVBL1/TIP49, RUVBL2, ING3, actin, ACTL6A/BAF53A, MORF4L1/MRG15, MORF4L2/MRGX, MRGBP, YEATS4/GAS41, VPS72/YL1 and MEAF6. The NuA4 complex interacts with MYC and the adenovirus E1A protein. RUVBL1 interacts with EP400. Component of a NuA4-related complex which contains EP400, TRRAP/PAF400, SRCAP, BRD8/SMAP, EPC1, DMAP1/DNMAP1, RUVBL1/TIP49, RUVBL2, actin, ACTL6A/BAF53A, VPS72 and YEATS4/GAS41. Component of the BAF53 complex, at least composed of ACTL6A/BAF53A, RUVBL1/TIP49, SMARCA2/BRM, and TRRAP/PAF400. Component of some MLL1/MLL complex, at least composed of the core components KMT2A/MLL1, ASH2L, HCFC1/HCF1, WDR5 and RBBP5, as well as the facultative components BACC1, CHD8, E2F6, HSP70, INO80C, KANSL1, LAS1L, MAX, MCRS1, MGA, MYST1/MOF, PELP1, PHF20, PRP31, RING2, RUVB1/TIP49A, RUVB2/TIP49B, SENP3, TAF1, TAF4, TAF6, TAF7, TAF9 and TEX10. Associates with alpha and gamma tubulins, particularly during metaphase and early anaphase. Interacts with NPAT. Component of the chromatin-remodeling INO80 complex; specifically part of a complex module associated with the helicase ATP-binding and the helicase C-terminal domain of INO80. Interacts with IGHMBP2. Interacts with OFD1. Interacts with HINT1. Component of a complex with USP49 and PSMC5. Component of a SWR1-like complex. Component of the R2TP complex composed at least of RUVBL1, RUVBL2, RPAP3 and PIHD1. Component of the PAQosome complex which is responsible for the biogenesis of several protein complexes and which consists of R2TP complex members RUVBL1, RUVBL2, RPAP3 and PIH1D1, URI complex members PFDN2, PFDN6, PDRG1, UXT and URI1 as well as ASDURF, POLR2E and DNAAF10/WDR92. Interacts with PIH1D1. Interacts with ITFG1. Interacts with WAC; WAC positively regulates MTOR activity by promoting the assembly of the TTT complex composed of TELO2, TTI1 and TTI2 and the RUVBL complex composed of RUVBL1 and RUVBL2 into the TTT-RUVBL complex which leads to the dimerization of the mTORC1 complex and its subsequent activation (By similarity). The RUVBL1/RUVBL2 complex interacts with ZNHIT1 (via HIT-type zinc finger), ZNHIT3 (via HIT-type zinc finger), ZNHIT6 (via HIT-type zinc finger) and DDX59/ZNHIT5 (via HIT-type zinc finger) in the presence of ADP (By similarity). Interacts with NOPCHAP1; the interaction is direct and disrupted upon ATP binding (By similarity). Interacts with SMG1 (By similarity). Interacts with NOP2, NOP56 and NUFIP1 (By similarity).</text>
</comment>
<comment type="interaction">
    <interactant intactId="EBI-1634999">
        <id>P60122</id>
    </interactant>
    <interactant intactId="EBI-2549911">
        <id>Q9WTM5</id>
        <label>Ruvbl2</label>
    </interactant>
    <organismsDiffer>false</organismsDiffer>
    <experiments>3</experiments>
</comment>
<comment type="interaction">
    <interactant intactId="EBI-1634999">
        <id>P60122</id>
    </interactant>
    <interactant intactId="EBI-2563549">
        <id>Q9UHK0</id>
        <label>NUFIP1</label>
    </interactant>
    <organismsDiffer>true</organismsDiffer>
    <experiments>2</experiments>
</comment>
<comment type="interaction">
    <interactant intactId="EBI-1634999">
        <id>P60122</id>
    </interactant>
    <interactant intactId="EBI-357318">
        <id>Q9NWS0</id>
        <label>PIH1D1</label>
    </interactant>
    <organismsDiffer>true</organismsDiffer>
    <experiments>2</experiments>
</comment>
<comment type="subcellular location">
    <subcellularLocation>
        <location evidence="2">Nucleus matrix</location>
    </subcellularLocation>
    <subcellularLocation>
        <location evidence="2">Nucleus</location>
        <location evidence="2">Nucleoplasm</location>
    </subcellularLocation>
    <subcellularLocation>
        <location evidence="2">Cytoplasm</location>
    </subcellularLocation>
    <subcellularLocation>
        <location evidence="2">Membrane</location>
    </subcellularLocation>
    <subcellularLocation>
        <location evidence="2">Cytoplasm</location>
        <location evidence="2">Cytoskeleton</location>
        <location evidence="2">Microtubule organizing center</location>
        <location evidence="2">Centrosome</location>
    </subcellularLocation>
    <subcellularLocation>
        <location evidence="1">Dynein axonemal particle</location>
    </subcellularLocation>
    <text evidence="2">Mainly localized in the nucleus, associated with nuclear matrix or in the nuclear cytosol, although it is also present in the cytoplasm and associated with the cell membranes. In prophase and prometaphase it is located at the centrosome and the branching microtubule spindles. After mitotic nuclear membrane disintigration it accumulates at the centrosome and sites of tubulin polymerization. As cells pass through metaphase and into telophase it is located close to the centrosome at the early phase of tubulin polymerization. In anaphase it accumulates at the zone of tubule interdigitation. In telophase it is found at polar tubule overlap, and it reappears at the site of chromosomal decondensation in the daughter cells.</text>
</comment>
<comment type="similarity">
    <text evidence="3">Belongs to the RuvB family.</text>
</comment>
<gene>
    <name type="primary">Ruvbl1</name>
    <name type="synonym">Tip49</name>
    <name type="synonym">Tip49a</name>
</gene>
<feature type="chain" id="PRO_0000165640" description="RuvB-like 1">
    <location>
        <begin position="1"/>
        <end position="456"/>
    </location>
</feature>
<feature type="binding site">
    <location>
        <begin position="70"/>
        <end position="77"/>
    </location>
    <ligand>
        <name>ATP</name>
        <dbReference type="ChEBI" id="CHEBI:30616"/>
    </ligand>
</feature>
<feature type="modified residue" description="N6-acetyllysine" evidence="2">
    <location>
        <position position="453"/>
    </location>
</feature>
<feature type="cross-link" description="Glycyl lysine isopeptide (Lys-Gly) (interchain with G-Cter in SUMO2)" evidence="2">
    <location>
        <position position="2"/>
    </location>
</feature>
<feature type="cross-link" description="Glycyl lysine isopeptide (Lys-Gly) (interchain with G-Cter in SUMO1); alternate" evidence="2">
    <location>
        <position position="225"/>
    </location>
</feature>
<feature type="cross-link" description="Glycyl lysine isopeptide (Lys-Gly) (interchain with G-Cter in SUMO2); alternate" evidence="2">
    <location>
        <position position="225"/>
    </location>
</feature>
<feature type="cross-link" description="Glycyl lysine isopeptide (Lys-Gly) (interchain with G-Cter in SUMO2)" evidence="2">
    <location>
        <position position="445"/>
    </location>
</feature>